<gene>
    <name evidence="1" type="primary">leuD</name>
    <name type="ordered locus">amb4068</name>
</gene>
<accession>Q2VZV3</accession>
<proteinExistence type="inferred from homology"/>
<reference key="1">
    <citation type="journal article" date="2005" name="DNA Res.">
        <title>Complete genome sequence of the facultative anaerobic magnetotactic bacterium Magnetospirillum sp. strain AMB-1.</title>
        <authorList>
            <person name="Matsunaga T."/>
            <person name="Okamura Y."/>
            <person name="Fukuda Y."/>
            <person name="Wahyudi A.T."/>
            <person name="Murase Y."/>
            <person name="Takeyama H."/>
        </authorList>
    </citation>
    <scope>NUCLEOTIDE SEQUENCE [LARGE SCALE GENOMIC DNA]</scope>
    <source>
        <strain>ATCC 700264 / AMB-1</strain>
    </source>
</reference>
<keyword id="KW-0028">Amino-acid biosynthesis</keyword>
<keyword id="KW-0100">Branched-chain amino acid biosynthesis</keyword>
<keyword id="KW-0432">Leucine biosynthesis</keyword>
<keyword id="KW-0456">Lyase</keyword>
<name>LEUD_PARM1</name>
<comment type="function">
    <text evidence="1">Catalyzes the isomerization between 2-isopropylmalate and 3-isopropylmalate, via the formation of 2-isopropylmaleate.</text>
</comment>
<comment type="catalytic activity">
    <reaction evidence="1">
        <text>(2R,3S)-3-isopropylmalate = (2S)-2-isopropylmalate</text>
        <dbReference type="Rhea" id="RHEA:32287"/>
        <dbReference type="ChEBI" id="CHEBI:1178"/>
        <dbReference type="ChEBI" id="CHEBI:35121"/>
        <dbReference type="EC" id="4.2.1.33"/>
    </reaction>
</comment>
<comment type="pathway">
    <text evidence="1">Amino-acid biosynthesis; L-leucine biosynthesis; L-leucine from 3-methyl-2-oxobutanoate: step 2/4.</text>
</comment>
<comment type="subunit">
    <text evidence="1">Heterodimer of LeuC and LeuD.</text>
</comment>
<comment type="similarity">
    <text evidence="1">Belongs to the LeuD family. LeuD type 1 subfamily.</text>
</comment>
<feature type="chain" id="PRO_1000063782" description="3-isopropylmalate dehydratase small subunit">
    <location>
        <begin position="1"/>
        <end position="201"/>
    </location>
</feature>
<evidence type="ECO:0000255" key="1">
    <source>
        <dbReference type="HAMAP-Rule" id="MF_01031"/>
    </source>
</evidence>
<sequence length="201" mass="22177">MEKFTTLTGVAAPLPMINVDTDMIIPKQFLKTIKRTGLGKNLFDEMRYTQDGKEVPDFVLNKPAYRSAKILVAGANFGCGSSREHAPWAIGDFGIRCVIAPSFADIFFNNCFKNGILPIKLPQEQVDKLLDDANRGSNAIVTVDLARQVITGPDGGSISFEVDPFRKHCLLNGLDDIGLTLQREDKIAAFEESRKTSSPWL</sequence>
<protein>
    <recommendedName>
        <fullName evidence="1">3-isopropylmalate dehydratase small subunit</fullName>
        <ecNumber evidence="1">4.2.1.33</ecNumber>
    </recommendedName>
    <alternativeName>
        <fullName evidence="1">Alpha-IPM isomerase</fullName>
        <shortName evidence="1">IPMI</shortName>
    </alternativeName>
    <alternativeName>
        <fullName evidence="1">Isopropylmalate isomerase</fullName>
    </alternativeName>
</protein>
<organism>
    <name type="scientific">Paramagnetospirillum magneticum (strain ATCC 700264 / AMB-1)</name>
    <name type="common">Magnetospirillum magneticum</name>
    <dbReference type="NCBI Taxonomy" id="342108"/>
    <lineage>
        <taxon>Bacteria</taxon>
        <taxon>Pseudomonadati</taxon>
        <taxon>Pseudomonadota</taxon>
        <taxon>Alphaproteobacteria</taxon>
        <taxon>Rhodospirillales</taxon>
        <taxon>Magnetospirillaceae</taxon>
        <taxon>Paramagnetospirillum</taxon>
    </lineage>
</organism>
<dbReference type="EC" id="4.2.1.33" evidence="1"/>
<dbReference type="EMBL" id="AP007255">
    <property type="protein sequence ID" value="BAE52872.1"/>
    <property type="molecule type" value="Genomic_DNA"/>
</dbReference>
<dbReference type="RefSeq" id="WP_011386419.1">
    <property type="nucleotide sequence ID" value="NC_007626.1"/>
</dbReference>
<dbReference type="SMR" id="Q2VZV3"/>
<dbReference type="STRING" id="342108.amb4068"/>
<dbReference type="KEGG" id="mag:amb4068"/>
<dbReference type="HOGENOM" id="CLU_081378_0_3_5"/>
<dbReference type="OrthoDB" id="9777465at2"/>
<dbReference type="UniPathway" id="UPA00048">
    <property type="reaction ID" value="UER00071"/>
</dbReference>
<dbReference type="Proteomes" id="UP000007058">
    <property type="component" value="Chromosome"/>
</dbReference>
<dbReference type="GO" id="GO:0009316">
    <property type="term" value="C:3-isopropylmalate dehydratase complex"/>
    <property type="evidence" value="ECO:0007669"/>
    <property type="project" value="InterPro"/>
</dbReference>
<dbReference type="GO" id="GO:0003861">
    <property type="term" value="F:3-isopropylmalate dehydratase activity"/>
    <property type="evidence" value="ECO:0007669"/>
    <property type="project" value="UniProtKB-UniRule"/>
</dbReference>
<dbReference type="GO" id="GO:0009098">
    <property type="term" value="P:L-leucine biosynthetic process"/>
    <property type="evidence" value="ECO:0007669"/>
    <property type="project" value="UniProtKB-UniRule"/>
</dbReference>
<dbReference type="CDD" id="cd01577">
    <property type="entry name" value="IPMI_Swivel"/>
    <property type="match status" value="1"/>
</dbReference>
<dbReference type="FunFam" id="3.20.19.10:FF:000003">
    <property type="entry name" value="3-isopropylmalate dehydratase small subunit"/>
    <property type="match status" value="1"/>
</dbReference>
<dbReference type="Gene3D" id="3.20.19.10">
    <property type="entry name" value="Aconitase, domain 4"/>
    <property type="match status" value="1"/>
</dbReference>
<dbReference type="HAMAP" id="MF_01031">
    <property type="entry name" value="LeuD_type1"/>
    <property type="match status" value="1"/>
</dbReference>
<dbReference type="InterPro" id="IPR004431">
    <property type="entry name" value="3-IsopropMal_deHydase_ssu"/>
</dbReference>
<dbReference type="InterPro" id="IPR015928">
    <property type="entry name" value="Aconitase/3IPM_dehydase_swvl"/>
</dbReference>
<dbReference type="InterPro" id="IPR000573">
    <property type="entry name" value="AconitaseA/IPMdHydase_ssu_swvl"/>
</dbReference>
<dbReference type="InterPro" id="IPR033940">
    <property type="entry name" value="IPMI_Swivel"/>
</dbReference>
<dbReference type="InterPro" id="IPR050075">
    <property type="entry name" value="LeuD"/>
</dbReference>
<dbReference type="NCBIfam" id="TIGR00171">
    <property type="entry name" value="leuD"/>
    <property type="match status" value="1"/>
</dbReference>
<dbReference type="NCBIfam" id="NF002458">
    <property type="entry name" value="PRK01641.1"/>
    <property type="match status" value="1"/>
</dbReference>
<dbReference type="PANTHER" id="PTHR43345:SF5">
    <property type="entry name" value="3-ISOPROPYLMALATE DEHYDRATASE SMALL SUBUNIT"/>
    <property type="match status" value="1"/>
</dbReference>
<dbReference type="PANTHER" id="PTHR43345">
    <property type="entry name" value="3-ISOPROPYLMALATE DEHYDRATASE SMALL SUBUNIT 2-RELATED-RELATED"/>
    <property type="match status" value="1"/>
</dbReference>
<dbReference type="Pfam" id="PF00694">
    <property type="entry name" value="Aconitase_C"/>
    <property type="match status" value="1"/>
</dbReference>
<dbReference type="SUPFAM" id="SSF52016">
    <property type="entry name" value="LeuD/IlvD-like"/>
    <property type="match status" value="1"/>
</dbReference>